<feature type="chain" id="PRO_0000200022" description="Exodeoxyribonuclease III">
    <location>
        <begin position="1"/>
        <end position="267"/>
    </location>
</feature>
<feature type="active site" evidence="1">
    <location>
        <position position="109"/>
    </location>
</feature>
<feature type="active site" description="Proton donor/acceptor" evidence="1">
    <location>
        <position position="151"/>
    </location>
</feature>
<feature type="binding site" evidence="1">
    <location>
        <position position="34"/>
    </location>
    <ligand>
        <name>Mg(2+)</name>
        <dbReference type="ChEBI" id="CHEBI:18420"/>
        <label>1</label>
    </ligand>
</feature>
<feature type="binding site" evidence="1">
    <location>
        <position position="151"/>
    </location>
    <ligand>
        <name>Mg(2+)</name>
        <dbReference type="ChEBI" id="CHEBI:18420"/>
        <label>2</label>
    </ligand>
</feature>
<feature type="binding site" evidence="1">
    <location>
        <position position="153"/>
    </location>
    <ligand>
        <name>Mg(2+)</name>
        <dbReference type="ChEBI" id="CHEBI:18420"/>
        <label>2</label>
    </ligand>
</feature>
<feature type="binding site" evidence="1">
    <location>
        <position position="258"/>
    </location>
    <ligand>
        <name>Mg(2+)</name>
        <dbReference type="ChEBI" id="CHEBI:18420"/>
        <label>1</label>
    </ligand>
</feature>
<feature type="site" description="Transition state stabilizer" evidence="1">
    <location>
        <position position="153"/>
    </location>
</feature>
<feature type="site" description="Important for catalytic activity" evidence="1">
    <location>
        <position position="229"/>
    </location>
</feature>
<feature type="site" description="Interaction with DNA substrate" evidence="1">
    <location>
        <position position="259"/>
    </location>
</feature>
<name>EX3_HAEIN</name>
<sequence length="267" mass="31025">MKFISFNINGLRARPHQLEAIIEKYQPDVIGLQEIKVADEAFPYEITENLGYHVFHHGQKGHYGVALLTKQEPKVIRRGFPTDNEDAQKRIIMADLETEFGLLTVINGYFPQGESRAHETKFPAKEKFYADLQQYLEKEHDKSNPILIMGDMNISPSDLDIGIGDENRKRWLRTGKCSFLPEERAWYQRLYDYGLEDSFRKLNPTANDKFSWFDYRSKGFDDNRGLRIDHILVSQKLAERCVDVGIALDIRAMEKPSDHAPIWAEFK</sequence>
<dbReference type="EC" id="3.1.11.2"/>
<dbReference type="EMBL" id="L42023">
    <property type="protein sequence ID" value="AAC21719.1"/>
    <property type="molecule type" value="Genomic_DNA"/>
</dbReference>
<dbReference type="PIR" id="H64044">
    <property type="entry name" value="H64044"/>
</dbReference>
<dbReference type="RefSeq" id="NP_438214.1">
    <property type="nucleotide sequence ID" value="NC_000907.1"/>
</dbReference>
<dbReference type="SMR" id="P44318"/>
<dbReference type="STRING" id="71421.HI_0041"/>
<dbReference type="EnsemblBacteria" id="AAC21719">
    <property type="protein sequence ID" value="AAC21719"/>
    <property type="gene ID" value="HI_0041"/>
</dbReference>
<dbReference type="KEGG" id="hin:HI_0041"/>
<dbReference type="PATRIC" id="fig|71421.8.peg.41"/>
<dbReference type="eggNOG" id="COG0708">
    <property type="taxonomic scope" value="Bacteria"/>
</dbReference>
<dbReference type="HOGENOM" id="CLU_027539_0_3_6"/>
<dbReference type="OrthoDB" id="9803914at2"/>
<dbReference type="PhylomeDB" id="P44318"/>
<dbReference type="BioCyc" id="HINF71421:G1GJ1-41-MONOMER"/>
<dbReference type="Proteomes" id="UP000000579">
    <property type="component" value="Chromosome"/>
</dbReference>
<dbReference type="GO" id="GO:0003677">
    <property type="term" value="F:DNA binding"/>
    <property type="evidence" value="ECO:0007669"/>
    <property type="project" value="InterPro"/>
</dbReference>
<dbReference type="GO" id="GO:0008311">
    <property type="term" value="F:double-stranded DNA 3'-5' DNA exonuclease activity"/>
    <property type="evidence" value="ECO:0007669"/>
    <property type="project" value="UniProtKB-EC"/>
</dbReference>
<dbReference type="GO" id="GO:0004519">
    <property type="term" value="F:endonuclease activity"/>
    <property type="evidence" value="ECO:0007669"/>
    <property type="project" value="InterPro"/>
</dbReference>
<dbReference type="GO" id="GO:0046872">
    <property type="term" value="F:metal ion binding"/>
    <property type="evidence" value="ECO:0007669"/>
    <property type="project" value="UniProtKB-KW"/>
</dbReference>
<dbReference type="GO" id="GO:0006281">
    <property type="term" value="P:DNA repair"/>
    <property type="evidence" value="ECO:0007669"/>
    <property type="project" value="UniProtKB-KW"/>
</dbReference>
<dbReference type="CDD" id="cd09086">
    <property type="entry name" value="ExoIII-like_AP-endo"/>
    <property type="match status" value="1"/>
</dbReference>
<dbReference type="Gene3D" id="3.60.10.10">
    <property type="entry name" value="Endonuclease/exonuclease/phosphatase"/>
    <property type="match status" value="1"/>
</dbReference>
<dbReference type="InterPro" id="IPR004808">
    <property type="entry name" value="AP_endonuc_1"/>
</dbReference>
<dbReference type="InterPro" id="IPR020847">
    <property type="entry name" value="AP_endonuclease_F1_BS"/>
</dbReference>
<dbReference type="InterPro" id="IPR020848">
    <property type="entry name" value="AP_endonuclease_F1_CS"/>
</dbReference>
<dbReference type="InterPro" id="IPR036691">
    <property type="entry name" value="Endo/exonu/phosph_ase_sf"/>
</dbReference>
<dbReference type="InterPro" id="IPR005135">
    <property type="entry name" value="Endo/exonuclease/phosphatase"/>
</dbReference>
<dbReference type="InterPro" id="IPR037493">
    <property type="entry name" value="ExoIII-like"/>
</dbReference>
<dbReference type="NCBIfam" id="TIGR00195">
    <property type="entry name" value="exoDNase_III"/>
    <property type="match status" value="1"/>
</dbReference>
<dbReference type="NCBIfam" id="NF008733">
    <property type="entry name" value="PRK11756.1"/>
    <property type="match status" value="1"/>
</dbReference>
<dbReference type="NCBIfam" id="TIGR00633">
    <property type="entry name" value="xth"/>
    <property type="match status" value="1"/>
</dbReference>
<dbReference type="PANTHER" id="PTHR43250">
    <property type="entry name" value="EXODEOXYRIBONUCLEASE III"/>
    <property type="match status" value="1"/>
</dbReference>
<dbReference type="PANTHER" id="PTHR43250:SF2">
    <property type="entry name" value="EXODEOXYRIBONUCLEASE III"/>
    <property type="match status" value="1"/>
</dbReference>
<dbReference type="Pfam" id="PF03372">
    <property type="entry name" value="Exo_endo_phos"/>
    <property type="match status" value="1"/>
</dbReference>
<dbReference type="SUPFAM" id="SSF56219">
    <property type="entry name" value="DNase I-like"/>
    <property type="match status" value="1"/>
</dbReference>
<dbReference type="PROSITE" id="PS00726">
    <property type="entry name" value="AP_NUCLEASE_F1_1"/>
    <property type="match status" value="1"/>
</dbReference>
<dbReference type="PROSITE" id="PS00727">
    <property type="entry name" value="AP_NUCLEASE_F1_2"/>
    <property type="match status" value="1"/>
</dbReference>
<dbReference type="PROSITE" id="PS00728">
    <property type="entry name" value="AP_NUCLEASE_F1_3"/>
    <property type="match status" value="1"/>
</dbReference>
<dbReference type="PROSITE" id="PS51435">
    <property type="entry name" value="AP_NUCLEASE_F1_4"/>
    <property type="match status" value="1"/>
</dbReference>
<organism>
    <name type="scientific">Haemophilus influenzae (strain ATCC 51907 / DSM 11121 / KW20 / Rd)</name>
    <dbReference type="NCBI Taxonomy" id="71421"/>
    <lineage>
        <taxon>Bacteria</taxon>
        <taxon>Pseudomonadati</taxon>
        <taxon>Pseudomonadota</taxon>
        <taxon>Gammaproteobacteria</taxon>
        <taxon>Pasteurellales</taxon>
        <taxon>Pasteurellaceae</taxon>
        <taxon>Haemophilus</taxon>
    </lineage>
</organism>
<reference key="1">
    <citation type="journal article" date="1995" name="Science">
        <title>Whole-genome random sequencing and assembly of Haemophilus influenzae Rd.</title>
        <authorList>
            <person name="Fleischmann R.D."/>
            <person name="Adams M.D."/>
            <person name="White O."/>
            <person name="Clayton R.A."/>
            <person name="Kirkness E.F."/>
            <person name="Kerlavage A.R."/>
            <person name="Bult C.J."/>
            <person name="Tomb J.-F."/>
            <person name="Dougherty B.A."/>
            <person name="Merrick J.M."/>
            <person name="McKenney K."/>
            <person name="Sutton G.G."/>
            <person name="FitzHugh W."/>
            <person name="Fields C.A."/>
            <person name="Gocayne J.D."/>
            <person name="Scott J.D."/>
            <person name="Shirley R."/>
            <person name="Liu L.-I."/>
            <person name="Glodek A."/>
            <person name="Kelley J.M."/>
            <person name="Weidman J.F."/>
            <person name="Phillips C.A."/>
            <person name="Spriggs T."/>
            <person name="Hedblom E."/>
            <person name="Cotton M.D."/>
            <person name="Utterback T.R."/>
            <person name="Hanna M.C."/>
            <person name="Nguyen D.T."/>
            <person name="Saudek D.M."/>
            <person name="Brandon R.C."/>
            <person name="Fine L.D."/>
            <person name="Fritchman J.L."/>
            <person name="Fuhrmann J.L."/>
            <person name="Geoghagen N.S.M."/>
            <person name="Gnehm C.L."/>
            <person name="McDonald L.A."/>
            <person name="Small K.V."/>
            <person name="Fraser C.M."/>
            <person name="Smith H.O."/>
            <person name="Venter J.C."/>
        </authorList>
    </citation>
    <scope>NUCLEOTIDE SEQUENCE [LARGE SCALE GENOMIC DNA]</scope>
    <source>
        <strain>ATCC 51907 / DSM 11121 / KW20 / Rd</strain>
    </source>
</reference>
<gene>
    <name type="primary">xthA</name>
    <name type="ordered locus">HI_0041</name>
</gene>
<evidence type="ECO:0000250" key="1"/>
<evidence type="ECO:0000305" key="2"/>
<comment type="function">
    <text evidence="1">Major apurinic-apyrimidinic endonuclease of E.coli. It removes the damaged DNA at cytosines and guanines by cleaving on the 3'-side of the AP site by a beta-elimination reaction (By similarity).</text>
</comment>
<comment type="catalytic activity">
    <reaction>
        <text>Exonucleolytic cleavage in the 3'- to 5'-direction to yield nucleoside 5'-phosphates.</text>
        <dbReference type="EC" id="3.1.11.2"/>
    </reaction>
</comment>
<comment type="cofactor">
    <cofactor evidence="1">
        <name>Mg(2+)</name>
        <dbReference type="ChEBI" id="CHEBI:18420"/>
    </cofactor>
    <cofactor evidence="1">
        <name>Mn(2+)</name>
        <dbReference type="ChEBI" id="CHEBI:29035"/>
    </cofactor>
    <text evidence="1">Probably binds two magnesium or manganese ions per subunit.</text>
</comment>
<comment type="subunit">
    <text evidence="1">Monomer.</text>
</comment>
<comment type="similarity">
    <text evidence="2">Belongs to the DNA repair enzymes AP/ExoA family.</text>
</comment>
<accession>P44318</accession>
<proteinExistence type="inferred from homology"/>
<keyword id="KW-0227">DNA damage</keyword>
<keyword id="KW-0234">DNA repair</keyword>
<keyword id="KW-0269">Exonuclease</keyword>
<keyword id="KW-0378">Hydrolase</keyword>
<keyword id="KW-0460">Magnesium</keyword>
<keyword id="KW-0479">Metal-binding</keyword>
<keyword id="KW-0540">Nuclease</keyword>
<keyword id="KW-1185">Reference proteome</keyword>
<protein>
    <recommendedName>
        <fullName>Exodeoxyribonuclease III</fullName>
        <shortName>EXO III</shortName>
        <shortName>Exonuclease III</shortName>
        <ecNumber>3.1.11.2</ecNumber>
    </recommendedName>
</protein>